<keyword id="KW-0067">ATP-binding</keyword>
<keyword id="KW-0436">Ligase</keyword>
<keyword id="KW-0460">Magnesium</keyword>
<keyword id="KW-0479">Metal-binding</keyword>
<keyword id="KW-0520">NAD</keyword>
<keyword id="KW-0547">Nucleotide-binding</keyword>
<comment type="function">
    <text evidence="1">Catalyzes the ATP-dependent amidation of deamido-NAD to form NAD. Uses ammonia as a nitrogen source.</text>
</comment>
<comment type="catalytic activity">
    <reaction evidence="1">
        <text>deamido-NAD(+) + NH4(+) + ATP = AMP + diphosphate + NAD(+) + H(+)</text>
        <dbReference type="Rhea" id="RHEA:21188"/>
        <dbReference type="ChEBI" id="CHEBI:15378"/>
        <dbReference type="ChEBI" id="CHEBI:28938"/>
        <dbReference type="ChEBI" id="CHEBI:30616"/>
        <dbReference type="ChEBI" id="CHEBI:33019"/>
        <dbReference type="ChEBI" id="CHEBI:57540"/>
        <dbReference type="ChEBI" id="CHEBI:58437"/>
        <dbReference type="ChEBI" id="CHEBI:456215"/>
        <dbReference type="EC" id="6.3.1.5"/>
    </reaction>
</comment>
<comment type="pathway">
    <text evidence="1">Cofactor biosynthesis; NAD(+) biosynthesis; NAD(+) from deamido-NAD(+) (ammonia route): step 1/1.</text>
</comment>
<comment type="subunit">
    <text evidence="1">Homodimer.</text>
</comment>
<comment type="similarity">
    <text evidence="1">Belongs to the NAD synthetase family.</text>
</comment>
<accession>B1IPJ0</accession>
<evidence type="ECO:0000255" key="1">
    <source>
        <dbReference type="HAMAP-Rule" id="MF_00193"/>
    </source>
</evidence>
<gene>
    <name evidence="1" type="primary">nadE</name>
    <name type="ordered locus">EcolC_1892</name>
</gene>
<name>NADE_ECOLC</name>
<feature type="chain" id="PRO_1000077553" description="NH(3)-dependent NAD(+) synthetase">
    <location>
        <begin position="1"/>
        <end position="275"/>
    </location>
</feature>
<feature type="binding site" evidence="1">
    <location>
        <begin position="46"/>
        <end position="53"/>
    </location>
    <ligand>
        <name>ATP</name>
        <dbReference type="ChEBI" id="CHEBI:30616"/>
    </ligand>
</feature>
<feature type="binding site" evidence="1">
    <location>
        <position position="52"/>
    </location>
    <ligand>
        <name>Mg(2+)</name>
        <dbReference type="ChEBI" id="CHEBI:18420"/>
    </ligand>
</feature>
<feature type="binding site" evidence="1">
    <location>
        <position position="140"/>
    </location>
    <ligand>
        <name>deamido-NAD(+)</name>
        <dbReference type="ChEBI" id="CHEBI:58437"/>
    </ligand>
</feature>
<feature type="binding site" evidence="1">
    <location>
        <position position="160"/>
    </location>
    <ligand>
        <name>ATP</name>
        <dbReference type="ChEBI" id="CHEBI:30616"/>
    </ligand>
</feature>
<feature type="binding site" evidence="1">
    <location>
        <position position="165"/>
    </location>
    <ligand>
        <name>Mg(2+)</name>
        <dbReference type="ChEBI" id="CHEBI:18420"/>
    </ligand>
</feature>
<feature type="binding site" evidence="1">
    <location>
        <position position="173"/>
    </location>
    <ligand>
        <name>deamido-NAD(+)</name>
        <dbReference type="ChEBI" id="CHEBI:58437"/>
    </ligand>
</feature>
<feature type="binding site" evidence="1">
    <location>
        <position position="180"/>
    </location>
    <ligand>
        <name>deamido-NAD(+)</name>
        <dbReference type="ChEBI" id="CHEBI:58437"/>
    </ligand>
</feature>
<feature type="binding site" evidence="1">
    <location>
        <position position="189"/>
    </location>
    <ligand>
        <name>ATP</name>
        <dbReference type="ChEBI" id="CHEBI:30616"/>
    </ligand>
</feature>
<feature type="binding site" evidence="1">
    <location>
        <position position="211"/>
    </location>
    <ligand>
        <name>ATP</name>
        <dbReference type="ChEBI" id="CHEBI:30616"/>
    </ligand>
</feature>
<feature type="binding site" evidence="1">
    <location>
        <begin position="260"/>
        <end position="261"/>
    </location>
    <ligand>
        <name>deamido-NAD(+)</name>
        <dbReference type="ChEBI" id="CHEBI:58437"/>
    </ligand>
</feature>
<dbReference type="EC" id="6.3.1.5" evidence="1"/>
<dbReference type="EMBL" id="CP000946">
    <property type="protein sequence ID" value="ACA77540.1"/>
    <property type="molecule type" value="Genomic_DNA"/>
</dbReference>
<dbReference type="RefSeq" id="WP_000175026.1">
    <property type="nucleotide sequence ID" value="NZ_MTFT01000006.1"/>
</dbReference>
<dbReference type="SMR" id="B1IPJ0"/>
<dbReference type="KEGG" id="ecl:EcolC_1892"/>
<dbReference type="HOGENOM" id="CLU_059327_3_0_6"/>
<dbReference type="UniPathway" id="UPA00253">
    <property type="reaction ID" value="UER00333"/>
</dbReference>
<dbReference type="GO" id="GO:0005737">
    <property type="term" value="C:cytoplasm"/>
    <property type="evidence" value="ECO:0007669"/>
    <property type="project" value="InterPro"/>
</dbReference>
<dbReference type="GO" id="GO:0005524">
    <property type="term" value="F:ATP binding"/>
    <property type="evidence" value="ECO:0007669"/>
    <property type="project" value="UniProtKB-UniRule"/>
</dbReference>
<dbReference type="GO" id="GO:0004359">
    <property type="term" value="F:glutaminase activity"/>
    <property type="evidence" value="ECO:0007669"/>
    <property type="project" value="InterPro"/>
</dbReference>
<dbReference type="GO" id="GO:0046872">
    <property type="term" value="F:metal ion binding"/>
    <property type="evidence" value="ECO:0007669"/>
    <property type="project" value="UniProtKB-KW"/>
</dbReference>
<dbReference type="GO" id="GO:0003952">
    <property type="term" value="F:NAD+ synthase (glutamine-hydrolyzing) activity"/>
    <property type="evidence" value="ECO:0007669"/>
    <property type="project" value="InterPro"/>
</dbReference>
<dbReference type="GO" id="GO:0008795">
    <property type="term" value="F:NAD+ synthase activity"/>
    <property type="evidence" value="ECO:0007669"/>
    <property type="project" value="UniProtKB-UniRule"/>
</dbReference>
<dbReference type="GO" id="GO:0009435">
    <property type="term" value="P:NAD biosynthetic process"/>
    <property type="evidence" value="ECO:0007669"/>
    <property type="project" value="UniProtKB-UniRule"/>
</dbReference>
<dbReference type="CDD" id="cd00553">
    <property type="entry name" value="NAD_synthase"/>
    <property type="match status" value="1"/>
</dbReference>
<dbReference type="FunFam" id="3.40.50.620:FF:000015">
    <property type="entry name" value="NH(3)-dependent NAD(+) synthetase"/>
    <property type="match status" value="1"/>
</dbReference>
<dbReference type="Gene3D" id="3.40.50.620">
    <property type="entry name" value="HUPs"/>
    <property type="match status" value="1"/>
</dbReference>
<dbReference type="HAMAP" id="MF_00193">
    <property type="entry name" value="NadE_ammonia_dep"/>
    <property type="match status" value="1"/>
</dbReference>
<dbReference type="InterPro" id="IPR022310">
    <property type="entry name" value="NAD/GMP_synthase"/>
</dbReference>
<dbReference type="InterPro" id="IPR003694">
    <property type="entry name" value="NAD_synthase"/>
</dbReference>
<dbReference type="InterPro" id="IPR022926">
    <property type="entry name" value="NH(3)-dep_NAD(+)_synth"/>
</dbReference>
<dbReference type="InterPro" id="IPR014729">
    <property type="entry name" value="Rossmann-like_a/b/a_fold"/>
</dbReference>
<dbReference type="NCBIfam" id="TIGR00552">
    <property type="entry name" value="nadE"/>
    <property type="match status" value="1"/>
</dbReference>
<dbReference type="NCBIfam" id="NF001979">
    <property type="entry name" value="PRK00768.1"/>
    <property type="match status" value="1"/>
</dbReference>
<dbReference type="PANTHER" id="PTHR23090">
    <property type="entry name" value="NH 3 /GLUTAMINE-DEPENDENT NAD + SYNTHETASE"/>
    <property type="match status" value="1"/>
</dbReference>
<dbReference type="PANTHER" id="PTHR23090:SF7">
    <property type="entry name" value="NH(3)-DEPENDENT NAD(+) SYNTHETASE"/>
    <property type="match status" value="1"/>
</dbReference>
<dbReference type="Pfam" id="PF02540">
    <property type="entry name" value="NAD_synthase"/>
    <property type="match status" value="1"/>
</dbReference>
<dbReference type="SUPFAM" id="SSF52402">
    <property type="entry name" value="Adenine nucleotide alpha hydrolases-like"/>
    <property type="match status" value="1"/>
</dbReference>
<protein>
    <recommendedName>
        <fullName evidence="1">NH(3)-dependent NAD(+) synthetase</fullName>
        <ecNumber evidence="1">6.3.1.5</ecNumber>
    </recommendedName>
</protein>
<organism>
    <name type="scientific">Escherichia coli (strain ATCC 8739 / DSM 1576 / NBRC 3972 / NCIMB 8545 / WDCM 00012 / Crooks)</name>
    <dbReference type="NCBI Taxonomy" id="481805"/>
    <lineage>
        <taxon>Bacteria</taxon>
        <taxon>Pseudomonadati</taxon>
        <taxon>Pseudomonadota</taxon>
        <taxon>Gammaproteobacteria</taxon>
        <taxon>Enterobacterales</taxon>
        <taxon>Enterobacteriaceae</taxon>
        <taxon>Escherichia</taxon>
    </lineage>
</organism>
<proteinExistence type="inferred from homology"/>
<sequence>MTLQQQIIKALGAKPQINAEEEIRRSVDFLKSYLQTYPFIKSLVLGISGGQDSTLAGKLCQMAINELRLETGNESLQFIAVRLPYGVQADEQDCQDAIAFIQPDRVLTVNIKGAVLASEQALREAGIELSDFVRGNEKARERMKAQYSIAGMTSGVVVGTDHAAEAITGFFTKYGDGGTDINPLYRLNKRQGKQLLAALACPEHLYKKAPTADLEDDRPSLPDEVALGVTYDNIDDYLEGKNVPQQVARTIENWYLKTEHKRRPPITVFDDFWKK</sequence>
<reference key="1">
    <citation type="submission" date="2008-02" db="EMBL/GenBank/DDBJ databases">
        <title>Complete sequence of Escherichia coli C str. ATCC 8739.</title>
        <authorList>
            <person name="Copeland A."/>
            <person name="Lucas S."/>
            <person name="Lapidus A."/>
            <person name="Glavina del Rio T."/>
            <person name="Dalin E."/>
            <person name="Tice H."/>
            <person name="Bruce D."/>
            <person name="Goodwin L."/>
            <person name="Pitluck S."/>
            <person name="Kiss H."/>
            <person name="Brettin T."/>
            <person name="Detter J.C."/>
            <person name="Han C."/>
            <person name="Kuske C.R."/>
            <person name="Schmutz J."/>
            <person name="Larimer F."/>
            <person name="Land M."/>
            <person name="Hauser L."/>
            <person name="Kyrpides N."/>
            <person name="Mikhailova N."/>
            <person name="Ingram L."/>
            <person name="Richardson P."/>
        </authorList>
    </citation>
    <scope>NUCLEOTIDE SEQUENCE [LARGE SCALE GENOMIC DNA]</scope>
    <source>
        <strain>ATCC 8739 / DSM 1576 / NBRC 3972 / NCIMB 8545 / WDCM 00012 / Crooks</strain>
    </source>
</reference>